<gene>
    <name evidence="1" type="primary">rplD</name>
    <name type="ordered locus">SeHA_C3743</name>
</gene>
<sequence length="201" mass="22087">MELVLKDAQSALTVSETTFGRDFNEALVHQVVVAYAAGARQGTRAQKTRAEVTGSGKKPWRQKGTGRARSGSIKSPIWRSGGVTFAARPQDHSQKVNKKMYRGALKSILSELVRQDRLIVVEKFSVEAPKTKLLAQKLKDMALEDVLIITGELDENLFLAARNLHKVDVRDATGIDPVSLIAFDKVVMTADAVKQVEEMLA</sequence>
<dbReference type="EMBL" id="CP001120">
    <property type="protein sequence ID" value="ACF66148.1"/>
    <property type="molecule type" value="Genomic_DNA"/>
</dbReference>
<dbReference type="RefSeq" id="WP_000424395.1">
    <property type="nucleotide sequence ID" value="NC_011083.1"/>
</dbReference>
<dbReference type="SMR" id="B4TKL4"/>
<dbReference type="GeneID" id="97442859"/>
<dbReference type="KEGG" id="seh:SeHA_C3743"/>
<dbReference type="HOGENOM" id="CLU_041575_5_2_6"/>
<dbReference type="Proteomes" id="UP000001866">
    <property type="component" value="Chromosome"/>
</dbReference>
<dbReference type="GO" id="GO:1990904">
    <property type="term" value="C:ribonucleoprotein complex"/>
    <property type="evidence" value="ECO:0007669"/>
    <property type="project" value="UniProtKB-KW"/>
</dbReference>
<dbReference type="GO" id="GO:0005840">
    <property type="term" value="C:ribosome"/>
    <property type="evidence" value="ECO:0007669"/>
    <property type="project" value="UniProtKB-KW"/>
</dbReference>
<dbReference type="GO" id="GO:0019843">
    <property type="term" value="F:rRNA binding"/>
    <property type="evidence" value="ECO:0007669"/>
    <property type="project" value="UniProtKB-UniRule"/>
</dbReference>
<dbReference type="GO" id="GO:0003735">
    <property type="term" value="F:structural constituent of ribosome"/>
    <property type="evidence" value="ECO:0007669"/>
    <property type="project" value="InterPro"/>
</dbReference>
<dbReference type="GO" id="GO:0006412">
    <property type="term" value="P:translation"/>
    <property type="evidence" value="ECO:0007669"/>
    <property type="project" value="UniProtKB-UniRule"/>
</dbReference>
<dbReference type="FunFam" id="3.40.1370.10:FF:000001">
    <property type="entry name" value="50S ribosomal protein L4"/>
    <property type="match status" value="1"/>
</dbReference>
<dbReference type="Gene3D" id="3.40.1370.10">
    <property type="match status" value="1"/>
</dbReference>
<dbReference type="HAMAP" id="MF_01328_B">
    <property type="entry name" value="Ribosomal_uL4_B"/>
    <property type="match status" value="1"/>
</dbReference>
<dbReference type="InterPro" id="IPR002136">
    <property type="entry name" value="Ribosomal_uL4"/>
</dbReference>
<dbReference type="InterPro" id="IPR013005">
    <property type="entry name" value="Ribosomal_uL4-like"/>
</dbReference>
<dbReference type="InterPro" id="IPR023574">
    <property type="entry name" value="Ribosomal_uL4_dom_sf"/>
</dbReference>
<dbReference type="NCBIfam" id="TIGR03953">
    <property type="entry name" value="rplD_bact"/>
    <property type="match status" value="1"/>
</dbReference>
<dbReference type="PANTHER" id="PTHR10746">
    <property type="entry name" value="50S RIBOSOMAL PROTEIN L4"/>
    <property type="match status" value="1"/>
</dbReference>
<dbReference type="PANTHER" id="PTHR10746:SF6">
    <property type="entry name" value="LARGE RIBOSOMAL SUBUNIT PROTEIN UL4M"/>
    <property type="match status" value="1"/>
</dbReference>
<dbReference type="Pfam" id="PF00573">
    <property type="entry name" value="Ribosomal_L4"/>
    <property type="match status" value="1"/>
</dbReference>
<dbReference type="SUPFAM" id="SSF52166">
    <property type="entry name" value="Ribosomal protein L4"/>
    <property type="match status" value="1"/>
</dbReference>
<organism>
    <name type="scientific">Salmonella heidelberg (strain SL476)</name>
    <dbReference type="NCBI Taxonomy" id="454169"/>
    <lineage>
        <taxon>Bacteria</taxon>
        <taxon>Pseudomonadati</taxon>
        <taxon>Pseudomonadota</taxon>
        <taxon>Gammaproteobacteria</taxon>
        <taxon>Enterobacterales</taxon>
        <taxon>Enterobacteriaceae</taxon>
        <taxon>Salmonella</taxon>
    </lineage>
</organism>
<proteinExistence type="inferred from homology"/>
<evidence type="ECO:0000255" key="1">
    <source>
        <dbReference type="HAMAP-Rule" id="MF_01328"/>
    </source>
</evidence>
<evidence type="ECO:0000256" key="2">
    <source>
        <dbReference type="SAM" id="MobiDB-lite"/>
    </source>
</evidence>
<evidence type="ECO:0000305" key="3"/>
<keyword id="KW-0687">Ribonucleoprotein</keyword>
<keyword id="KW-0689">Ribosomal protein</keyword>
<keyword id="KW-0694">RNA-binding</keyword>
<keyword id="KW-0699">rRNA-binding</keyword>
<protein>
    <recommendedName>
        <fullName evidence="1">Large ribosomal subunit protein uL4</fullName>
    </recommendedName>
    <alternativeName>
        <fullName evidence="3">50S ribosomal protein L4</fullName>
    </alternativeName>
</protein>
<name>RL4_SALHS</name>
<comment type="function">
    <text evidence="1">One of the primary rRNA binding proteins, this protein initially binds near the 5'-end of the 23S rRNA. It is important during the early stages of 50S assembly. It makes multiple contacts with different domains of the 23S rRNA in the assembled 50S subunit and ribosome.</text>
</comment>
<comment type="function">
    <text evidence="1">Forms part of the polypeptide exit tunnel.</text>
</comment>
<comment type="subunit">
    <text evidence="1">Part of the 50S ribosomal subunit.</text>
</comment>
<comment type="similarity">
    <text evidence="1">Belongs to the universal ribosomal protein uL4 family.</text>
</comment>
<feature type="chain" id="PRO_1000142182" description="Large ribosomal subunit protein uL4">
    <location>
        <begin position="1"/>
        <end position="201"/>
    </location>
</feature>
<feature type="region of interest" description="Disordered" evidence="2">
    <location>
        <begin position="44"/>
        <end position="71"/>
    </location>
</feature>
<reference key="1">
    <citation type="journal article" date="2011" name="J. Bacteriol.">
        <title>Comparative genomics of 28 Salmonella enterica isolates: evidence for CRISPR-mediated adaptive sublineage evolution.</title>
        <authorList>
            <person name="Fricke W.F."/>
            <person name="Mammel M.K."/>
            <person name="McDermott P.F."/>
            <person name="Tartera C."/>
            <person name="White D.G."/>
            <person name="Leclerc J.E."/>
            <person name="Ravel J."/>
            <person name="Cebula T.A."/>
        </authorList>
    </citation>
    <scope>NUCLEOTIDE SEQUENCE [LARGE SCALE GENOMIC DNA]</scope>
    <source>
        <strain>SL476</strain>
    </source>
</reference>
<accession>B4TKL4</accession>